<gene>
    <name evidence="1" type="primary">rplM</name>
    <name type="ordered locus">RoseRS_1155</name>
</gene>
<protein>
    <recommendedName>
        <fullName evidence="1">Large ribosomal subunit protein uL13</fullName>
    </recommendedName>
    <alternativeName>
        <fullName evidence="3">50S ribosomal protein L13</fullName>
    </alternativeName>
</protein>
<comment type="function">
    <text evidence="1">This protein is one of the early assembly proteins of the 50S ribosomal subunit, although it is not seen to bind rRNA by itself. It is important during the early stages of 50S assembly.</text>
</comment>
<comment type="subunit">
    <text evidence="1">Part of the 50S ribosomal subunit.</text>
</comment>
<comment type="similarity">
    <text evidence="1">Belongs to the universal ribosomal protein uL13 family.</text>
</comment>
<reference key="1">
    <citation type="submission" date="2007-04" db="EMBL/GenBank/DDBJ databases">
        <title>Complete sequence of Roseiflexus sp. RS-1.</title>
        <authorList>
            <consortium name="US DOE Joint Genome Institute"/>
            <person name="Copeland A."/>
            <person name="Lucas S."/>
            <person name="Lapidus A."/>
            <person name="Barry K."/>
            <person name="Detter J.C."/>
            <person name="Glavina del Rio T."/>
            <person name="Hammon N."/>
            <person name="Israni S."/>
            <person name="Dalin E."/>
            <person name="Tice H."/>
            <person name="Pitluck S."/>
            <person name="Chertkov O."/>
            <person name="Brettin T."/>
            <person name="Bruce D."/>
            <person name="Han C."/>
            <person name="Schmutz J."/>
            <person name="Larimer F."/>
            <person name="Land M."/>
            <person name="Hauser L."/>
            <person name="Kyrpides N."/>
            <person name="Mikhailova N."/>
            <person name="Bryant D.A."/>
            <person name="Richardson P."/>
        </authorList>
    </citation>
    <scope>NUCLEOTIDE SEQUENCE [LARGE SCALE GENOMIC DNA]</scope>
    <source>
        <strain>RS-1</strain>
    </source>
</reference>
<dbReference type="EMBL" id="CP000686">
    <property type="protein sequence ID" value="ABQ89562.1"/>
    <property type="molecule type" value="Genomic_DNA"/>
</dbReference>
<dbReference type="RefSeq" id="WP_011955915.1">
    <property type="nucleotide sequence ID" value="NC_009523.1"/>
</dbReference>
<dbReference type="SMR" id="A5USF9"/>
<dbReference type="STRING" id="357808.RoseRS_1155"/>
<dbReference type="KEGG" id="rrs:RoseRS_1155"/>
<dbReference type="eggNOG" id="COG0102">
    <property type="taxonomic scope" value="Bacteria"/>
</dbReference>
<dbReference type="HOGENOM" id="CLU_082184_2_2_0"/>
<dbReference type="OrthoDB" id="9801330at2"/>
<dbReference type="Proteomes" id="UP000006554">
    <property type="component" value="Chromosome"/>
</dbReference>
<dbReference type="GO" id="GO:0022625">
    <property type="term" value="C:cytosolic large ribosomal subunit"/>
    <property type="evidence" value="ECO:0007669"/>
    <property type="project" value="TreeGrafter"/>
</dbReference>
<dbReference type="GO" id="GO:0003729">
    <property type="term" value="F:mRNA binding"/>
    <property type="evidence" value="ECO:0007669"/>
    <property type="project" value="TreeGrafter"/>
</dbReference>
<dbReference type="GO" id="GO:0003735">
    <property type="term" value="F:structural constituent of ribosome"/>
    <property type="evidence" value="ECO:0007669"/>
    <property type="project" value="InterPro"/>
</dbReference>
<dbReference type="GO" id="GO:0017148">
    <property type="term" value="P:negative regulation of translation"/>
    <property type="evidence" value="ECO:0007669"/>
    <property type="project" value="TreeGrafter"/>
</dbReference>
<dbReference type="GO" id="GO:0006412">
    <property type="term" value="P:translation"/>
    <property type="evidence" value="ECO:0007669"/>
    <property type="project" value="UniProtKB-UniRule"/>
</dbReference>
<dbReference type="CDD" id="cd00392">
    <property type="entry name" value="Ribosomal_L13"/>
    <property type="match status" value="1"/>
</dbReference>
<dbReference type="FunFam" id="3.90.1180.10:FF:000001">
    <property type="entry name" value="50S ribosomal protein L13"/>
    <property type="match status" value="1"/>
</dbReference>
<dbReference type="Gene3D" id="3.90.1180.10">
    <property type="entry name" value="Ribosomal protein L13"/>
    <property type="match status" value="1"/>
</dbReference>
<dbReference type="HAMAP" id="MF_01366">
    <property type="entry name" value="Ribosomal_uL13"/>
    <property type="match status" value="1"/>
</dbReference>
<dbReference type="InterPro" id="IPR005822">
    <property type="entry name" value="Ribosomal_uL13"/>
</dbReference>
<dbReference type="InterPro" id="IPR005823">
    <property type="entry name" value="Ribosomal_uL13_bac-type"/>
</dbReference>
<dbReference type="InterPro" id="IPR023563">
    <property type="entry name" value="Ribosomal_uL13_CS"/>
</dbReference>
<dbReference type="InterPro" id="IPR036899">
    <property type="entry name" value="Ribosomal_uL13_sf"/>
</dbReference>
<dbReference type="NCBIfam" id="TIGR01066">
    <property type="entry name" value="rplM_bact"/>
    <property type="match status" value="1"/>
</dbReference>
<dbReference type="PANTHER" id="PTHR11545:SF2">
    <property type="entry name" value="LARGE RIBOSOMAL SUBUNIT PROTEIN UL13M"/>
    <property type="match status" value="1"/>
</dbReference>
<dbReference type="PANTHER" id="PTHR11545">
    <property type="entry name" value="RIBOSOMAL PROTEIN L13"/>
    <property type="match status" value="1"/>
</dbReference>
<dbReference type="Pfam" id="PF00572">
    <property type="entry name" value="Ribosomal_L13"/>
    <property type="match status" value="1"/>
</dbReference>
<dbReference type="PIRSF" id="PIRSF002181">
    <property type="entry name" value="Ribosomal_L13"/>
    <property type="match status" value="1"/>
</dbReference>
<dbReference type="SUPFAM" id="SSF52161">
    <property type="entry name" value="Ribosomal protein L13"/>
    <property type="match status" value="1"/>
</dbReference>
<dbReference type="PROSITE" id="PS00783">
    <property type="entry name" value="RIBOSOMAL_L13"/>
    <property type="match status" value="1"/>
</dbReference>
<accession>A5USF9</accession>
<feature type="chain" id="PRO_1000055463" description="Large ribosomal subunit protein uL13">
    <location>
        <begin position="1"/>
        <end position="146"/>
    </location>
</feature>
<feature type="region of interest" description="Disordered" evidence="2">
    <location>
        <begin position="125"/>
        <end position="146"/>
    </location>
</feature>
<name>RL13_ROSS1</name>
<evidence type="ECO:0000255" key="1">
    <source>
        <dbReference type="HAMAP-Rule" id="MF_01366"/>
    </source>
</evidence>
<evidence type="ECO:0000256" key="2">
    <source>
        <dbReference type="SAM" id="MobiDB-lite"/>
    </source>
</evidence>
<evidence type="ECO:0000305" key="3"/>
<organism>
    <name type="scientific">Roseiflexus sp. (strain RS-1)</name>
    <dbReference type="NCBI Taxonomy" id="357808"/>
    <lineage>
        <taxon>Bacteria</taxon>
        <taxon>Bacillati</taxon>
        <taxon>Chloroflexota</taxon>
        <taxon>Chloroflexia</taxon>
        <taxon>Chloroflexales</taxon>
        <taxon>Roseiflexineae</taxon>
        <taxon>Roseiflexaceae</taxon>
        <taxon>Roseiflexus</taxon>
    </lineage>
</organism>
<sequence>MKTYAQKASEVQREWYVIDATNQTLGRLATQIATLLRGKHKPTFSPYIDGGDFVIVVNAERIRLTGRKPEQKMYYRHSNYPGGFKAVSFKQLMAKHPERVLRFAVKGMLPKTRLGRQQLTKLKIYAGPKHPHAAQQPKVYEPRPRG</sequence>
<keyword id="KW-0687">Ribonucleoprotein</keyword>
<keyword id="KW-0689">Ribosomal protein</keyword>
<proteinExistence type="inferred from homology"/>